<sequence>MAPPSLPILLVLLSLSSSLSSSSAAAAGRWTDAHATFYGGADASGTMGGACGYGNTYGQGYGTDTAALSAVMFGDGLSCGACFELRCGGGGGGDRRGCLPPAAGKSIVVTATDLCPANHALPGDRGGWCNPPLHHFDLSQPAFLRIARFQSGIVPVSYRRVACRRKGGMRFTINGHSYFNLVLVSNVGGAGDVHAVAVKAGGGRKARWQAMARNWGQNWQSGALLDGQALSFTVTTGDRRSVVSYNVAPAGWAFGQTFTGRQFT</sequence>
<protein>
    <recommendedName>
        <fullName>Expansin-A21</fullName>
    </recommendedName>
    <alternativeName>
        <fullName>Alpha-expansin-21</fullName>
    </alternativeName>
    <alternativeName>
        <fullName>OsEXP21</fullName>
    </alternativeName>
    <alternativeName>
        <fullName>OsEXPA21</fullName>
    </alternativeName>
    <alternativeName>
        <fullName>OsaEXPa1.21</fullName>
    </alternativeName>
</protein>
<comment type="function">
    <text evidence="1">May cause loosening and extension of plant cell walls by disrupting non-covalent bonding between cellulose microfibrils and matrix glucans. No enzymatic activity has been found. May be required for rapid internodal elongation in deepwater rice during submergence (By similarity).</text>
</comment>
<comment type="subcellular location">
    <subcellularLocation>
        <location evidence="1">Secreted</location>
        <location evidence="1">Cell wall</location>
    </subcellularLocation>
    <subcellularLocation>
        <location evidence="1">Membrane</location>
        <topology evidence="1">Peripheral membrane protein</topology>
    </subcellularLocation>
</comment>
<comment type="similarity">
    <text evidence="5">Belongs to the expansin family. Expansin A subfamily.</text>
</comment>
<comment type="online information" name="EXPANSIN homepage">
    <link uri="https://www.dept.psu.edu/biology/groups/expansins/index.htm"/>
</comment>
<evidence type="ECO:0000250" key="1"/>
<evidence type="ECO:0000255" key="2"/>
<evidence type="ECO:0000255" key="3">
    <source>
        <dbReference type="PROSITE-ProRule" id="PRU00078"/>
    </source>
</evidence>
<evidence type="ECO:0000255" key="4">
    <source>
        <dbReference type="PROSITE-ProRule" id="PRU00079"/>
    </source>
</evidence>
<evidence type="ECO:0000305" key="5"/>
<organism>
    <name type="scientific">Oryza sativa subsp. japonica</name>
    <name type="common">Rice</name>
    <dbReference type="NCBI Taxonomy" id="39947"/>
    <lineage>
        <taxon>Eukaryota</taxon>
        <taxon>Viridiplantae</taxon>
        <taxon>Streptophyta</taxon>
        <taxon>Embryophyta</taxon>
        <taxon>Tracheophyta</taxon>
        <taxon>Spermatophyta</taxon>
        <taxon>Magnoliopsida</taxon>
        <taxon>Liliopsida</taxon>
        <taxon>Poales</taxon>
        <taxon>Poaceae</taxon>
        <taxon>BOP clade</taxon>
        <taxon>Oryzoideae</taxon>
        <taxon>Oryzeae</taxon>
        <taxon>Oryzinae</taxon>
        <taxon>Oryza</taxon>
        <taxon>Oryza sativa</taxon>
    </lineage>
</organism>
<proteinExistence type="evidence at transcript level"/>
<name>EXP21_ORYSJ</name>
<dbReference type="EMBL" id="AF394556">
    <property type="protein sequence ID" value="AAL24492.1"/>
    <property type="molecule type" value="Genomic_DNA"/>
</dbReference>
<dbReference type="EMBL" id="AC084766">
    <property type="protein sequence ID" value="AAL82516.1"/>
    <property type="molecule type" value="Genomic_DNA"/>
</dbReference>
<dbReference type="EMBL" id="DP000009">
    <property type="protein sequence ID" value="ABF96232.1"/>
    <property type="molecule type" value="Genomic_DNA"/>
</dbReference>
<dbReference type="EMBL" id="AP008209">
    <property type="protein sequence ID" value="BAF12138.1"/>
    <property type="molecule type" value="Genomic_DNA"/>
</dbReference>
<dbReference type="EMBL" id="AP014959">
    <property type="protein sequence ID" value="BAS84418.1"/>
    <property type="molecule type" value="Genomic_DNA"/>
</dbReference>
<dbReference type="EMBL" id="DQ061062">
    <property type="protein sequence ID" value="AAY63553.1"/>
    <property type="molecule type" value="mRNA"/>
</dbReference>
<dbReference type="RefSeq" id="XP_015629932.1">
    <property type="nucleotide sequence ID" value="XM_015774446.1"/>
</dbReference>
<dbReference type="SMR" id="Q10KN4"/>
<dbReference type="STRING" id="39947.Q10KN4"/>
<dbReference type="PaxDb" id="39947-Q10KN4"/>
<dbReference type="EnsemblPlants" id="Os03t0377100-01">
    <property type="protein sequence ID" value="Os03t0377100-01"/>
    <property type="gene ID" value="Os03g0377100"/>
</dbReference>
<dbReference type="Gramene" id="Os03t0377100-01">
    <property type="protein sequence ID" value="Os03t0377100-01"/>
    <property type="gene ID" value="Os03g0377100"/>
</dbReference>
<dbReference type="KEGG" id="dosa:Os03g0377100"/>
<dbReference type="eggNOG" id="ENOG502QPUJ">
    <property type="taxonomic scope" value="Eukaryota"/>
</dbReference>
<dbReference type="HOGENOM" id="CLU_027462_0_1_1"/>
<dbReference type="InParanoid" id="Q10KN4"/>
<dbReference type="OMA" id="DLCPANH"/>
<dbReference type="OrthoDB" id="679245at2759"/>
<dbReference type="Proteomes" id="UP000000763">
    <property type="component" value="Chromosome 3"/>
</dbReference>
<dbReference type="Proteomes" id="UP000059680">
    <property type="component" value="Chromosome 3"/>
</dbReference>
<dbReference type="GO" id="GO:0005576">
    <property type="term" value="C:extracellular region"/>
    <property type="evidence" value="ECO:0007669"/>
    <property type="project" value="UniProtKB-KW"/>
</dbReference>
<dbReference type="GO" id="GO:0016020">
    <property type="term" value="C:membrane"/>
    <property type="evidence" value="ECO:0007669"/>
    <property type="project" value="UniProtKB-SubCell"/>
</dbReference>
<dbReference type="GO" id="GO:0009828">
    <property type="term" value="P:plant-type cell wall loosening"/>
    <property type="evidence" value="ECO:0000250"/>
    <property type="project" value="UniProtKB"/>
</dbReference>
<dbReference type="CDD" id="cd22274">
    <property type="entry name" value="DPBB_EXPA_N"/>
    <property type="match status" value="1"/>
</dbReference>
<dbReference type="FunFam" id="2.60.40.760:FF:000001">
    <property type="entry name" value="Expansin"/>
    <property type="match status" value="1"/>
</dbReference>
<dbReference type="Gene3D" id="2.60.40.760">
    <property type="entry name" value="Expansin, cellulose-binding-like domain"/>
    <property type="match status" value="1"/>
</dbReference>
<dbReference type="Gene3D" id="2.40.40.10">
    <property type="entry name" value="RlpA-like domain"/>
    <property type="match status" value="1"/>
</dbReference>
<dbReference type="InterPro" id="IPR007118">
    <property type="entry name" value="Expan_Lol_pI"/>
</dbReference>
<dbReference type="InterPro" id="IPR002963">
    <property type="entry name" value="Expansin"/>
</dbReference>
<dbReference type="InterPro" id="IPR007112">
    <property type="entry name" value="Expansin/allergen_DPBB_dom"/>
</dbReference>
<dbReference type="InterPro" id="IPR007117">
    <property type="entry name" value="Expansin_CBD"/>
</dbReference>
<dbReference type="InterPro" id="IPR036749">
    <property type="entry name" value="Expansin_CBD_sf"/>
</dbReference>
<dbReference type="InterPro" id="IPR009009">
    <property type="entry name" value="RlpA-like_DPBB"/>
</dbReference>
<dbReference type="InterPro" id="IPR036908">
    <property type="entry name" value="RlpA-like_sf"/>
</dbReference>
<dbReference type="PANTHER" id="PTHR31867">
    <property type="entry name" value="EXPANSIN-A15"/>
    <property type="match status" value="1"/>
</dbReference>
<dbReference type="Pfam" id="PF03330">
    <property type="entry name" value="DPBB_1"/>
    <property type="match status" value="1"/>
</dbReference>
<dbReference type="Pfam" id="PF01357">
    <property type="entry name" value="Expansin_C"/>
    <property type="match status" value="1"/>
</dbReference>
<dbReference type="PRINTS" id="PR01226">
    <property type="entry name" value="EXPANSIN"/>
</dbReference>
<dbReference type="PRINTS" id="PR01225">
    <property type="entry name" value="EXPANSNFAMLY"/>
</dbReference>
<dbReference type="SMART" id="SM00837">
    <property type="entry name" value="DPBB_1"/>
    <property type="match status" value="1"/>
</dbReference>
<dbReference type="SUPFAM" id="SSF50685">
    <property type="entry name" value="Barwin-like endoglucanases"/>
    <property type="match status" value="1"/>
</dbReference>
<dbReference type="SUPFAM" id="SSF49590">
    <property type="entry name" value="PHL pollen allergen"/>
    <property type="match status" value="1"/>
</dbReference>
<dbReference type="PROSITE" id="PS50843">
    <property type="entry name" value="EXPANSIN_CBD"/>
    <property type="match status" value="1"/>
</dbReference>
<dbReference type="PROSITE" id="PS50842">
    <property type="entry name" value="EXPANSIN_EG45"/>
    <property type="match status" value="1"/>
</dbReference>
<keyword id="KW-0134">Cell wall</keyword>
<keyword id="KW-0961">Cell wall biogenesis/degradation</keyword>
<keyword id="KW-0472">Membrane</keyword>
<keyword id="KW-1185">Reference proteome</keyword>
<keyword id="KW-0964">Secreted</keyword>
<keyword id="KW-0732">Signal</keyword>
<reference key="1">
    <citation type="journal article" date="2002" name="Plant Physiol.">
        <title>Expression of alpha-expansin and expansin-like genes in deepwater rice.</title>
        <authorList>
            <person name="Lee Y."/>
            <person name="Kende H."/>
        </authorList>
    </citation>
    <scope>NUCLEOTIDE SEQUENCE [GENOMIC DNA]</scope>
</reference>
<reference key="2">
    <citation type="journal article" date="2005" name="Genome Res.">
        <title>Sequence, annotation, and analysis of synteny between rice chromosome 3 and diverged grass species.</title>
        <authorList>
            <consortium name="The rice chromosome 3 sequencing consortium"/>
            <person name="Buell C.R."/>
            <person name="Yuan Q."/>
            <person name="Ouyang S."/>
            <person name="Liu J."/>
            <person name="Zhu W."/>
            <person name="Wang A."/>
            <person name="Maiti R."/>
            <person name="Haas B."/>
            <person name="Wortman J."/>
            <person name="Pertea M."/>
            <person name="Jones K.M."/>
            <person name="Kim M."/>
            <person name="Overton L."/>
            <person name="Tsitrin T."/>
            <person name="Fadrosh D."/>
            <person name="Bera J."/>
            <person name="Weaver B."/>
            <person name="Jin S."/>
            <person name="Johri S."/>
            <person name="Reardon M."/>
            <person name="Webb K."/>
            <person name="Hill J."/>
            <person name="Moffat K."/>
            <person name="Tallon L."/>
            <person name="Van Aken S."/>
            <person name="Lewis M."/>
            <person name="Utterback T."/>
            <person name="Feldblyum T."/>
            <person name="Zismann V."/>
            <person name="Iobst S."/>
            <person name="Hsiao J."/>
            <person name="de Vazeille A.R."/>
            <person name="Salzberg S.L."/>
            <person name="White O."/>
            <person name="Fraser C.M."/>
            <person name="Yu Y."/>
            <person name="Kim H."/>
            <person name="Rambo T."/>
            <person name="Currie J."/>
            <person name="Collura K."/>
            <person name="Kernodle-Thompson S."/>
            <person name="Wei F."/>
            <person name="Kudrna K."/>
            <person name="Ammiraju J.S.S."/>
            <person name="Luo M."/>
            <person name="Goicoechea J.L."/>
            <person name="Wing R.A."/>
            <person name="Henry D."/>
            <person name="Oates R."/>
            <person name="Palmer M."/>
            <person name="Pries G."/>
            <person name="Saski C."/>
            <person name="Simmons J."/>
            <person name="Soderlund C."/>
            <person name="Nelson W."/>
            <person name="de la Bastide M."/>
            <person name="Spiegel L."/>
            <person name="Nascimento L."/>
            <person name="Huang E."/>
            <person name="Preston R."/>
            <person name="Zutavern T."/>
            <person name="Palmer L."/>
            <person name="O'Shaughnessy A."/>
            <person name="Dike S."/>
            <person name="McCombie W.R."/>
            <person name="Minx P."/>
            <person name="Cordum H."/>
            <person name="Wilson R."/>
            <person name="Jin W."/>
            <person name="Lee H.R."/>
            <person name="Jiang J."/>
            <person name="Jackson S."/>
        </authorList>
    </citation>
    <scope>NUCLEOTIDE SEQUENCE [LARGE SCALE GENOMIC DNA]</scope>
    <source>
        <strain>cv. Nipponbare</strain>
    </source>
</reference>
<reference key="3">
    <citation type="journal article" date="2005" name="Nature">
        <title>The map-based sequence of the rice genome.</title>
        <authorList>
            <consortium name="International rice genome sequencing project (IRGSP)"/>
        </authorList>
    </citation>
    <scope>NUCLEOTIDE SEQUENCE [LARGE SCALE GENOMIC DNA]</scope>
    <source>
        <strain>cv. Nipponbare</strain>
    </source>
</reference>
<reference key="4">
    <citation type="journal article" date="2008" name="Nucleic Acids Res.">
        <title>The rice annotation project database (RAP-DB): 2008 update.</title>
        <authorList>
            <consortium name="The rice annotation project (RAP)"/>
        </authorList>
    </citation>
    <scope>GENOME REANNOTATION</scope>
    <source>
        <strain>cv. Nipponbare</strain>
    </source>
</reference>
<reference key="5">
    <citation type="journal article" date="2013" name="Rice">
        <title>Improvement of the Oryza sativa Nipponbare reference genome using next generation sequence and optical map data.</title>
        <authorList>
            <person name="Kawahara Y."/>
            <person name="de la Bastide M."/>
            <person name="Hamilton J.P."/>
            <person name="Kanamori H."/>
            <person name="McCombie W.R."/>
            <person name="Ouyang S."/>
            <person name="Schwartz D.C."/>
            <person name="Tanaka T."/>
            <person name="Wu J."/>
            <person name="Zhou S."/>
            <person name="Childs K.L."/>
            <person name="Davidson R.M."/>
            <person name="Lin H."/>
            <person name="Quesada-Ocampo L."/>
            <person name="Vaillancourt B."/>
            <person name="Sakai H."/>
            <person name="Lee S.S."/>
            <person name="Kim J."/>
            <person name="Numa H."/>
            <person name="Itoh T."/>
            <person name="Buell C.R."/>
            <person name="Matsumoto T."/>
        </authorList>
    </citation>
    <scope>GENOME REANNOTATION</scope>
    <source>
        <strain>cv. Nipponbare</strain>
    </source>
</reference>
<reference key="6">
    <citation type="journal article" date="2005" name="Mol. Cells">
        <title>Characterization and transcriptional expression of the alpha-expansin gene family in rice.</title>
        <authorList>
            <person name="Shin J.-H."/>
            <person name="Jeong D.-H."/>
            <person name="Park M.C."/>
            <person name="An G."/>
        </authorList>
    </citation>
    <scope>NUCLEOTIDE SEQUENCE [MRNA] OF 9-250</scope>
    <source>
        <strain>cv. Dongjin</strain>
    </source>
</reference>
<reference key="7">
    <citation type="journal article" date="2004" name="Plant Mol. Biol.">
        <title>Nomenclature for members of the expansin superfamily of genes and proteins.</title>
        <authorList>
            <person name="Kende H."/>
            <person name="Bradford K.J."/>
            <person name="Brummell D.A."/>
            <person name="Cho H.-T."/>
            <person name="Cosgrove D.J."/>
            <person name="Fleming A.J."/>
            <person name="Gehring C."/>
            <person name="Lee Y."/>
            <person name="McQueen-Mason S.J."/>
            <person name="Rose J.K.C."/>
            <person name="Voesenek L.A.C."/>
        </authorList>
    </citation>
    <scope>NOMENCLATURE</scope>
</reference>
<gene>
    <name type="primary">EXPA21</name>
    <name type="synonym">EXP21</name>
    <name type="ordered locus">Os03g0377100</name>
    <name type="ordered locus">LOC_Os03g25990</name>
    <name type="ORF">OSJNBb0048D20.14</name>
</gene>
<feature type="signal peptide" evidence="2">
    <location>
        <begin position="1"/>
        <end position="24"/>
    </location>
</feature>
<feature type="chain" id="PRO_0000252000" description="Expansin-A21">
    <location>
        <begin position="25"/>
        <end position="264"/>
    </location>
</feature>
<feature type="domain" description="Expansin-like EG45" evidence="4">
    <location>
        <begin position="48"/>
        <end position="168"/>
    </location>
</feature>
<feature type="domain" description="Expansin-like CBD" evidence="3">
    <location>
        <begin position="178"/>
        <end position="260"/>
    </location>
</feature>
<accession>Q10KN4</accession>
<accession>Q0DRK0</accession>
<accession>Q4PR45</accession>
<accession>Q946I1</accession>